<sequence>MATKRDYYEVLGLAKGASDDEIKKAYRKLSKKYHPDINKEADAEEKFKEVSEAYEVLSDPQKKAAYDQYGHAGTDPNYGGGAGGFGGFGGGGFSSSGFGGFEDIFDSFFGGGGGRSVDPNAPRQGADLQYTIQLKFEEAIFGVEKEIKYNREDTCATCGGNGAKPGTHPETCHKCHGSGTINVERQTPLGRMMSRQTCDVCHGTGKEIKEPCPTCHGTGHEKKAHTVKVNVPAGVEDGQQMRLANQGEAGTNGGPYGDLYVVFRVEDSDIFDRDGAEIYYDLPVSFVQAALGDEVTVPTVHGDVKLKIPAGTQTGTNFRLRGKGAPRLRGGGNGDQHVKVKLITPKNLNEEQKDALRAFAKAGGQNVTEQQEEGFFDKMKDAFGGKKKK</sequence>
<reference key="1">
    <citation type="journal article" date="2003" name="Science">
        <title>Role of mobile DNA in the evolution of vancomycin-resistant Enterococcus faecalis.</title>
        <authorList>
            <person name="Paulsen I.T."/>
            <person name="Banerjei L."/>
            <person name="Myers G.S.A."/>
            <person name="Nelson K.E."/>
            <person name="Seshadri R."/>
            <person name="Read T.D."/>
            <person name="Fouts D.E."/>
            <person name="Eisen J.A."/>
            <person name="Gill S.R."/>
            <person name="Heidelberg J.F."/>
            <person name="Tettelin H."/>
            <person name="Dodson R.J."/>
            <person name="Umayam L.A."/>
            <person name="Brinkac L.M."/>
            <person name="Beanan M.J."/>
            <person name="Daugherty S.C."/>
            <person name="DeBoy R.T."/>
            <person name="Durkin S.A."/>
            <person name="Kolonay J.F."/>
            <person name="Madupu R."/>
            <person name="Nelson W.C."/>
            <person name="Vamathevan J.J."/>
            <person name="Tran B."/>
            <person name="Upton J."/>
            <person name="Hansen T."/>
            <person name="Shetty J."/>
            <person name="Khouri H.M."/>
            <person name="Utterback T.R."/>
            <person name="Radune D."/>
            <person name="Ketchum K.A."/>
            <person name="Dougherty B.A."/>
            <person name="Fraser C.M."/>
        </authorList>
    </citation>
    <scope>NUCLEOTIDE SEQUENCE [LARGE SCALE GENOMIC DNA]</scope>
    <source>
        <strain>ATCC 700802 / V583</strain>
    </source>
</reference>
<gene>
    <name evidence="1" type="primary">dnaJ</name>
    <name type="ordered locus">EF_1310</name>
</gene>
<proteinExistence type="inferred from homology"/>
<keyword id="KW-0143">Chaperone</keyword>
<keyword id="KW-0963">Cytoplasm</keyword>
<keyword id="KW-0235">DNA replication</keyword>
<keyword id="KW-0479">Metal-binding</keyword>
<keyword id="KW-1185">Reference proteome</keyword>
<keyword id="KW-0677">Repeat</keyword>
<keyword id="KW-0346">Stress response</keyword>
<keyword id="KW-0862">Zinc</keyword>
<keyword id="KW-0863">Zinc-finger</keyword>
<dbReference type="EMBL" id="AE016830">
    <property type="protein sequence ID" value="AAO81102.1"/>
    <property type="molecule type" value="Genomic_DNA"/>
</dbReference>
<dbReference type="RefSeq" id="NP_815032.1">
    <property type="nucleotide sequence ID" value="NC_004668.1"/>
</dbReference>
<dbReference type="RefSeq" id="WP_002357822.1">
    <property type="nucleotide sequence ID" value="NZ_KE136528.1"/>
</dbReference>
<dbReference type="SMR" id="Q835R5"/>
<dbReference type="STRING" id="226185.EF_1310"/>
<dbReference type="EnsemblBacteria" id="AAO81102">
    <property type="protein sequence ID" value="AAO81102"/>
    <property type="gene ID" value="EF_1310"/>
</dbReference>
<dbReference type="GeneID" id="60893692"/>
<dbReference type="KEGG" id="efa:EF1310"/>
<dbReference type="PATRIC" id="fig|226185.45.peg.2191"/>
<dbReference type="eggNOG" id="COG0484">
    <property type="taxonomic scope" value="Bacteria"/>
</dbReference>
<dbReference type="HOGENOM" id="CLU_017633_0_7_9"/>
<dbReference type="Proteomes" id="UP000001415">
    <property type="component" value="Chromosome"/>
</dbReference>
<dbReference type="GO" id="GO:0005737">
    <property type="term" value="C:cytoplasm"/>
    <property type="evidence" value="ECO:0007669"/>
    <property type="project" value="UniProtKB-SubCell"/>
</dbReference>
<dbReference type="GO" id="GO:0005524">
    <property type="term" value="F:ATP binding"/>
    <property type="evidence" value="ECO:0007669"/>
    <property type="project" value="InterPro"/>
</dbReference>
<dbReference type="GO" id="GO:0031072">
    <property type="term" value="F:heat shock protein binding"/>
    <property type="evidence" value="ECO:0007669"/>
    <property type="project" value="InterPro"/>
</dbReference>
<dbReference type="GO" id="GO:0051082">
    <property type="term" value="F:unfolded protein binding"/>
    <property type="evidence" value="ECO:0007669"/>
    <property type="project" value="UniProtKB-UniRule"/>
</dbReference>
<dbReference type="GO" id="GO:0008270">
    <property type="term" value="F:zinc ion binding"/>
    <property type="evidence" value="ECO:0007669"/>
    <property type="project" value="UniProtKB-UniRule"/>
</dbReference>
<dbReference type="GO" id="GO:0051085">
    <property type="term" value="P:chaperone cofactor-dependent protein refolding"/>
    <property type="evidence" value="ECO:0007669"/>
    <property type="project" value="TreeGrafter"/>
</dbReference>
<dbReference type="GO" id="GO:0006260">
    <property type="term" value="P:DNA replication"/>
    <property type="evidence" value="ECO:0007669"/>
    <property type="project" value="UniProtKB-KW"/>
</dbReference>
<dbReference type="GO" id="GO:0042026">
    <property type="term" value="P:protein refolding"/>
    <property type="evidence" value="ECO:0007669"/>
    <property type="project" value="TreeGrafter"/>
</dbReference>
<dbReference type="GO" id="GO:0009408">
    <property type="term" value="P:response to heat"/>
    <property type="evidence" value="ECO:0007669"/>
    <property type="project" value="InterPro"/>
</dbReference>
<dbReference type="CDD" id="cd06257">
    <property type="entry name" value="DnaJ"/>
    <property type="match status" value="1"/>
</dbReference>
<dbReference type="CDD" id="cd10747">
    <property type="entry name" value="DnaJ_C"/>
    <property type="match status" value="1"/>
</dbReference>
<dbReference type="CDD" id="cd10719">
    <property type="entry name" value="DnaJ_zf"/>
    <property type="match status" value="1"/>
</dbReference>
<dbReference type="FunFam" id="1.10.287.110:FF:000031">
    <property type="entry name" value="Molecular chaperone DnaJ"/>
    <property type="match status" value="1"/>
</dbReference>
<dbReference type="FunFam" id="2.10.230.10:FF:000002">
    <property type="entry name" value="Molecular chaperone DnaJ"/>
    <property type="match status" value="1"/>
</dbReference>
<dbReference type="FunFam" id="2.60.260.20:FF:000004">
    <property type="entry name" value="Molecular chaperone DnaJ"/>
    <property type="match status" value="1"/>
</dbReference>
<dbReference type="Gene3D" id="1.10.287.110">
    <property type="entry name" value="DnaJ domain"/>
    <property type="match status" value="1"/>
</dbReference>
<dbReference type="Gene3D" id="2.10.230.10">
    <property type="entry name" value="Heat shock protein DnaJ, cysteine-rich domain"/>
    <property type="match status" value="1"/>
</dbReference>
<dbReference type="Gene3D" id="2.60.260.20">
    <property type="entry name" value="Urease metallochaperone UreE, N-terminal domain"/>
    <property type="match status" value="2"/>
</dbReference>
<dbReference type="HAMAP" id="MF_01152">
    <property type="entry name" value="DnaJ"/>
    <property type="match status" value="1"/>
</dbReference>
<dbReference type="InterPro" id="IPR012724">
    <property type="entry name" value="DnaJ"/>
</dbReference>
<dbReference type="InterPro" id="IPR002939">
    <property type="entry name" value="DnaJ_C"/>
</dbReference>
<dbReference type="InterPro" id="IPR001623">
    <property type="entry name" value="DnaJ_domain"/>
</dbReference>
<dbReference type="InterPro" id="IPR018253">
    <property type="entry name" value="DnaJ_domain_CS"/>
</dbReference>
<dbReference type="InterPro" id="IPR008971">
    <property type="entry name" value="HSP40/DnaJ_pept-bd"/>
</dbReference>
<dbReference type="InterPro" id="IPR001305">
    <property type="entry name" value="HSP_DnaJ_Cys-rich_dom"/>
</dbReference>
<dbReference type="InterPro" id="IPR036410">
    <property type="entry name" value="HSP_DnaJ_Cys-rich_dom_sf"/>
</dbReference>
<dbReference type="InterPro" id="IPR036869">
    <property type="entry name" value="J_dom_sf"/>
</dbReference>
<dbReference type="NCBIfam" id="TIGR02349">
    <property type="entry name" value="DnaJ_bact"/>
    <property type="match status" value="1"/>
</dbReference>
<dbReference type="NCBIfam" id="NF008035">
    <property type="entry name" value="PRK10767.1"/>
    <property type="match status" value="1"/>
</dbReference>
<dbReference type="NCBIfam" id="NF010869">
    <property type="entry name" value="PRK14276.1"/>
    <property type="match status" value="1"/>
</dbReference>
<dbReference type="NCBIfam" id="NF010873">
    <property type="entry name" value="PRK14280.1"/>
    <property type="match status" value="1"/>
</dbReference>
<dbReference type="PANTHER" id="PTHR43096:SF48">
    <property type="entry name" value="CHAPERONE PROTEIN DNAJ"/>
    <property type="match status" value="1"/>
</dbReference>
<dbReference type="PANTHER" id="PTHR43096">
    <property type="entry name" value="DNAJ HOMOLOG 1, MITOCHONDRIAL-RELATED"/>
    <property type="match status" value="1"/>
</dbReference>
<dbReference type="Pfam" id="PF00226">
    <property type="entry name" value="DnaJ"/>
    <property type="match status" value="1"/>
</dbReference>
<dbReference type="Pfam" id="PF01556">
    <property type="entry name" value="DnaJ_C"/>
    <property type="match status" value="1"/>
</dbReference>
<dbReference type="Pfam" id="PF00684">
    <property type="entry name" value="DnaJ_CXXCXGXG"/>
    <property type="match status" value="1"/>
</dbReference>
<dbReference type="PRINTS" id="PR00625">
    <property type="entry name" value="JDOMAIN"/>
</dbReference>
<dbReference type="SMART" id="SM00271">
    <property type="entry name" value="DnaJ"/>
    <property type="match status" value="1"/>
</dbReference>
<dbReference type="SUPFAM" id="SSF46565">
    <property type="entry name" value="Chaperone J-domain"/>
    <property type="match status" value="1"/>
</dbReference>
<dbReference type="SUPFAM" id="SSF57938">
    <property type="entry name" value="DnaJ/Hsp40 cysteine-rich domain"/>
    <property type="match status" value="1"/>
</dbReference>
<dbReference type="SUPFAM" id="SSF49493">
    <property type="entry name" value="HSP40/DnaJ peptide-binding domain"/>
    <property type="match status" value="2"/>
</dbReference>
<dbReference type="PROSITE" id="PS00636">
    <property type="entry name" value="DNAJ_1"/>
    <property type="match status" value="1"/>
</dbReference>
<dbReference type="PROSITE" id="PS50076">
    <property type="entry name" value="DNAJ_2"/>
    <property type="match status" value="1"/>
</dbReference>
<dbReference type="PROSITE" id="PS51188">
    <property type="entry name" value="ZF_CR"/>
    <property type="match status" value="1"/>
</dbReference>
<organism>
    <name type="scientific">Enterococcus faecalis (strain ATCC 700802 / V583)</name>
    <dbReference type="NCBI Taxonomy" id="226185"/>
    <lineage>
        <taxon>Bacteria</taxon>
        <taxon>Bacillati</taxon>
        <taxon>Bacillota</taxon>
        <taxon>Bacilli</taxon>
        <taxon>Lactobacillales</taxon>
        <taxon>Enterococcaceae</taxon>
        <taxon>Enterococcus</taxon>
    </lineage>
</organism>
<comment type="function">
    <text evidence="1">Participates actively in the response to hyperosmotic and heat shock by preventing the aggregation of stress-denatured proteins and by disaggregating proteins, also in an autonomous, DnaK-independent fashion. Unfolded proteins bind initially to DnaJ; upon interaction with the DnaJ-bound protein, DnaK hydrolyzes its bound ATP, resulting in the formation of a stable complex. GrpE releases ADP from DnaK; ATP binding to DnaK triggers the release of the substrate protein, thus completing the reaction cycle. Several rounds of ATP-dependent interactions between DnaJ, DnaK and GrpE are required for fully efficient folding. Also involved, together with DnaK and GrpE, in the DNA replication of plasmids through activation of initiation proteins.</text>
</comment>
<comment type="cofactor">
    <cofactor evidence="1">
        <name>Zn(2+)</name>
        <dbReference type="ChEBI" id="CHEBI:29105"/>
    </cofactor>
    <text evidence="1">Binds 2 Zn(2+) ions per monomer.</text>
</comment>
<comment type="subunit">
    <text evidence="1">Homodimer.</text>
</comment>
<comment type="subcellular location">
    <subcellularLocation>
        <location evidence="1">Cytoplasm</location>
    </subcellularLocation>
</comment>
<comment type="domain">
    <text evidence="1">The J domain is necessary and sufficient to stimulate DnaK ATPase activity. Zinc center 1 plays an important role in the autonomous, DnaK-independent chaperone activity of DnaJ. Zinc center 2 is essential for interaction with DnaK and for DnaJ activity.</text>
</comment>
<comment type="similarity">
    <text evidence="1">Belongs to the DnaJ family.</text>
</comment>
<name>DNAJ_ENTFA</name>
<protein>
    <recommendedName>
        <fullName evidence="1">Chaperone protein DnaJ</fullName>
    </recommendedName>
</protein>
<accession>Q835R5</accession>
<evidence type="ECO:0000255" key="1">
    <source>
        <dbReference type="HAMAP-Rule" id="MF_01152"/>
    </source>
</evidence>
<feature type="chain" id="PRO_0000070783" description="Chaperone protein DnaJ">
    <location>
        <begin position="1"/>
        <end position="389"/>
    </location>
</feature>
<feature type="domain" description="J" evidence="1">
    <location>
        <begin position="6"/>
        <end position="70"/>
    </location>
</feature>
<feature type="repeat" description="CXXCXGXG motif">
    <location>
        <begin position="155"/>
        <end position="162"/>
    </location>
</feature>
<feature type="repeat" description="CXXCXGXG motif">
    <location>
        <begin position="172"/>
        <end position="179"/>
    </location>
</feature>
<feature type="repeat" description="CXXCXGXG motif">
    <location>
        <begin position="198"/>
        <end position="205"/>
    </location>
</feature>
<feature type="repeat" description="CXXCXGXG motif">
    <location>
        <begin position="212"/>
        <end position="219"/>
    </location>
</feature>
<feature type="zinc finger region" description="CR-type" evidence="1">
    <location>
        <begin position="142"/>
        <end position="224"/>
    </location>
</feature>
<feature type="binding site" evidence="1">
    <location>
        <position position="155"/>
    </location>
    <ligand>
        <name>Zn(2+)</name>
        <dbReference type="ChEBI" id="CHEBI:29105"/>
        <label>1</label>
    </ligand>
</feature>
<feature type="binding site" evidence="1">
    <location>
        <position position="158"/>
    </location>
    <ligand>
        <name>Zn(2+)</name>
        <dbReference type="ChEBI" id="CHEBI:29105"/>
        <label>1</label>
    </ligand>
</feature>
<feature type="binding site" evidence="1">
    <location>
        <position position="172"/>
    </location>
    <ligand>
        <name>Zn(2+)</name>
        <dbReference type="ChEBI" id="CHEBI:29105"/>
        <label>2</label>
    </ligand>
</feature>
<feature type="binding site" evidence="1">
    <location>
        <position position="175"/>
    </location>
    <ligand>
        <name>Zn(2+)</name>
        <dbReference type="ChEBI" id="CHEBI:29105"/>
        <label>2</label>
    </ligand>
</feature>
<feature type="binding site" evidence="1">
    <location>
        <position position="198"/>
    </location>
    <ligand>
        <name>Zn(2+)</name>
        <dbReference type="ChEBI" id="CHEBI:29105"/>
        <label>2</label>
    </ligand>
</feature>
<feature type="binding site" evidence="1">
    <location>
        <position position="201"/>
    </location>
    <ligand>
        <name>Zn(2+)</name>
        <dbReference type="ChEBI" id="CHEBI:29105"/>
        <label>2</label>
    </ligand>
</feature>
<feature type="binding site" evidence="1">
    <location>
        <position position="212"/>
    </location>
    <ligand>
        <name>Zn(2+)</name>
        <dbReference type="ChEBI" id="CHEBI:29105"/>
        <label>1</label>
    </ligand>
</feature>
<feature type="binding site" evidence="1">
    <location>
        <position position="215"/>
    </location>
    <ligand>
        <name>Zn(2+)</name>
        <dbReference type="ChEBI" id="CHEBI:29105"/>
        <label>1</label>
    </ligand>
</feature>